<dbReference type="EMBL" id="AE014075">
    <property type="protein sequence ID" value="AAN78698.1"/>
    <property type="status" value="ALT_INIT"/>
    <property type="molecule type" value="Genomic_DNA"/>
</dbReference>
<dbReference type="RefSeq" id="WP_000246882.1">
    <property type="nucleotide sequence ID" value="NZ_CP051263.1"/>
</dbReference>
<dbReference type="SMR" id="P0A7V1"/>
<dbReference type="STRING" id="199310.c0204"/>
<dbReference type="GeneID" id="89519558"/>
<dbReference type="KEGG" id="ecc:c0204"/>
<dbReference type="eggNOG" id="COG0052">
    <property type="taxonomic scope" value="Bacteria"/>
</dbReference>
<dbReference type="HOGENOM" id="CLU_040318_1_0_6"/>
<dbReference type="Proteomes" id="UP000001410">
    <property type="component" value="Chromosome"/>
</dbReference>
<dbReference type="GO" id="GO:0022627">
    <property type="term" value="C:cytosolic small ribosomal subunit"/>
    <property type="evidence" value="ECO:0007669"/>
    <property type="project" value="TreeGrafter"/>
</dbReference>
<dbReference type="GO" id="GO:0003735">
    <property type="term" value="F:structural constituent of ribosome"/>
    <property type="evidence" value="ECO:0007669"/>
    <property type="project" value="InterPro"/>
</dbReference>
<dbReference type="GO" id="GO:0006412">
    <property type="term" value="P:translation"/>
    <property type="evidence" value="ECO:0007669"/>
    <property type="project" value="UniProtKB-UniRule"/>
</dbReference>
<dbReference type="CDD" id="cd01425">
    <property type="entry name" value="RPS2"/>
    <property type="match status" value="1"/>
</dbReference>
<dbReference type="FunFam" id="1.10.287.610:FF:000001">
    <property type="entry name" value="30S ribosomal protein S2"/>
    <property type="match status" value="1"/>
</dbReference>
<dbReference type="Gene3D" id="3.40.50.10490">
    <property type="entry name" value="Glucose-6-phosphate isomerase like protein, domain 1"/>
    <property type="match status" value="1"/>
</dbReference>
<dbReference type="Gene3D" id="1.10.287.610">
    <property type="entry name" value="Helix hairpin bin"/>
    <property type="match status" value="1"/>
</dbReference>
<dbReference type="HAMAP" id="MF_00291_B">
    <property type="entry name" value="Ribosomal_uS2_B"/>
    <property type="match status" value="1"/>
</dbReference>
<dbReference type="InterPro" id="IPR001865">
    <property type="entry name" value="Ribosomal_uS2"/>
</dbReference>
<dbReference type="InterPro" id="IPR005706">
    <property type="entry name" value="Ribosomal_uS2_bac/mit/plastid"/>
</dbReference>
<dbReference type="InterPro" id="IPR018130">
    <property type="entry name" value="Ribosomal_uS2_CS"/>
</dbReference>
<dbReference type="InterPro" id="IPR023591">
    <property type="entry name" value="Ribosomal_uS2_flav_dom_sf"/>
</dbReference>
<dbReference type="NCBIfam" id="TIGR01011">
    <property type="entry name" value="rpsB_bact"/>
    <property type="match status" value="1"/>
</dbReference>
<dbReference type="PANTHER" id="PTHR12534">
    <property type="entry name" value="30S RIBOSOMAL PROTEIN S2 PROKARYOTIC AND ORGANELLAR"/>
    <property type="match status" value="1"/>
</dbReference>
<dbReference type="PANTHER" id="PTHR12534:SF0">
    <property type="entry name" value="SMALL RIBOSOMAL SUBUNIT PROTEIN US2M"/>
    <property type="match status" value="1"/>
</dbReference>
<dbReference type="Pfam" id="PF00318">
    <property type="entry name" value="Ribosomal_S2"/>
    <property type="match status" value="1"/>
</dbReference>
<dbReference type="PRINTS" id="PR00395">
    <property type="entry name" value="RIBOSOMALS2"/>
</dbReference>
<dbReference type="SUPFAM" id="SSF52313">
    <property type="entry name" value="Ribosomal protein S2"/>
    <property type="match status" value="1"/>
</dbReference>
<dbReference type="PROSITE" id="PS00962">
    <property type="entry name" value="RIBOSOMAL_S2_1"/>
    <property type="match status" value="1"/>
</dbReference>
<dbReference type="PROSITE" id="PS00963">
    <property type="entry name" value="RIBOSOMAL_S2_2"/>
    <property type="match status" value="1"/>
</dbReference>
<name>RS2_ECOL6</name>
<protein>
    <recommendedName>
        <fullName evidence="2">Small ribosomal subunit protein uS2</fullName>
    </recommendedName>
    <alternativeName>
        <fullName>30S ribosomal protein S2</fullName>
    </alternativeName>
</protein>
<gene>
    <name type="primary">rpsB</name>
    <name type="ordered locus">c0204</name>
</gene>
<proteinExistence type="inferred from homology"/>
<evidence type="ECO:0000250" key="1"/>
<evidence type="ECO:0000305" key="2"/>
<feature type="initiator methionine" description="Removed" evidence="1">
    <location>
        <position position="1"/>
    </location>
</feature>
<feature type="chain" id="PRO_0000134166" description="Small ribosomal subunit protein uS2">
    <location>
        <begin position="2"/>
        <end position="241"/>
    </location>
</feature>
<accession>P0A7V1</accession>
<accession>P02351</accession>
<accession>Q9R2E5</accession>
<comment type="subunit">
    <text evidence="1">Part of the 30S ribosomal subunit. Some nascent polypeptide chains are able to cross-link to this protein in situ (By similarity).</text>
</comment>
<comment type="similarity">
    <text evidence="2">Belongs to the universal ribosomal protein uS2 family.</text>
</comment>
<comment type="sequence caution" evidence="2">
    <conflict type="erroneous initiation">
        <sequence resource="EMBL-CDS" id="AAN78698"/>
    </conflict>
</comment>
<reference key="1">
    <citation type="journal article" date="2002" name="Proc. Natl. Acad. Sci. U.S.A.">
        <title>Extensive mosaic structure revealed by the complete genome sequence of uropathogenic Escherichia coli.</title>
        <authorList>
            <person name="Welch R.A."/>
            <person name="Burland V."/>
            <person name="Plunkett G. III"/>
            <person name="Redford P."/>
            <person name="Roesch P."/>
            <person name="Rasko D."/>
            <person name="Buckles E.L."/>
            <person name="Liou S.-R."/>
            <person name="Boutin A."/>
            <person name="Hackett J."/>
            <person name="Stroud D."/>
            <person name="Mayhew G.F."/>
            <person name="Rose D.J."/>
            <person name="Zhou S."/>
            <person name="Schwartz D.C."/>
            <person name="Perna N.T."/>
            <person name="Mobley H.L.T."/>
            <person name="Donnenberg M.S."/>
            <person name="Blattner F.R."/>
        </authorList>
    </citation>
    <scope>NUCLEOTIDE SEQUENCE [LARGE SCALE GENOMIC DNA]</scope>
    <source>
        <strain>CFT073 / ATCC 700928 / UPEC</strain>
    </source>
</reference>
<sequence length="241" mass="26744">MATVSMRDMLKAGVHFGHQTRYWNPKMKPFIFGARNKVHIINLEKTVPMFNEALAELNKIASRKGKILFVGTKRAASEAVKDAALSCDQFFVNHRWLGGMLTNWKTVRQSIKRLKDLETQSQDGTFDKLTKKEALMRTRELEKLENSLGGIKDMGGLPDALFVIDADHEHIAIKEANNLGIPVFAIVDTNSDPDGVDFVIPGNDDAIRAVTLYLGAVAATVREGRSQDLASQAEESFVEAE</sequence>
<organism>
    <name type="scientific">Escherichia coli O6:H1 (strain CFT073 / ATCC 700928 / UPEC)</name>
    <dbReference type="NCBI Taxonomy" id="199310"/>
    <lineage>
        <taxon>Bacteria</taxon>
        <taxon>Pseudomonadati</taxon>
        <taxon>Pseudomonadota</taxon>
        <taxon>Gammaproteobacteria</taxon>
        <taxon>Enterobacterales</taxon>
        <taxon>Enterobacteriaceae</taxon>
        <taxon>Escherichia</taxon>
    </lineage>
</organism>
<keyword id="KW-1185">Reference proteome</keyword>
<keyword id="KW-0687">Ribonucleoprotein</keyword>
<keyword id="KW-0689">Ribosomal protein</keyword>